<name>TM107_DANRE</name>
<proteinExistence type="evidence at transcript level"/>
<gene>
    <name type="primary">tmem107</name>
    <name type="ORF">zgc:77926</name>
</gene>
<dbReference type="EMBL" id="BC065897">
    <property type="protein sequence ID" value="AAH65897.1"/>
    <property type="molecule type" value="mRNA"/>
</dbReference>
<dbReference type="RefSeq" id="NP_998376.1">
    <property type="nucleotide sequence ID" value="NM_213211.1"/>
</dbReference>
<dbReference type="FunCoup" id="Q6NZZ4">
    <property type="interactions" value="1"/>
</dbReference>
<dbReference type="STRING" id="7955.ENSDARP00000137423"/>
<dbReference type="Ensembl" id="ENSDART00000170410">
    <property type="protein sequence ID" value="ENSDARP00000137423"/>
    <property type="gene ID" value="ENSDARG00000059150"/>
</dbReference>
<dbReference type="GeneID" id="406492"/>
<dbReference type="KEGG" id="dre:406492"/>
<dbReference type="AGR" id="ZFIN:ZDB-GENE-040426-2294"/>
<dbReference type="CTD" id="84314"/>
<dbReference type="ZFIN" id="ZDB-GENE-040426-2294">
    <property type="gene designation" value="tmem107"/>
</dbReference>
<dbReference type="HOGENOM" id="CLU_127745_0_0_1"/>
<dbReference type="InParanoid" id="Q6NZZ4"/>
<dbReference type="OMA" id="WTYWIIF"/>
<dbReference type="OrthoDB" id="2114471at2759"/>
<dbReference type="PhylomeDB" id="Q6NZZ4"/>
<dbReference type="PRO" id="PR:Q6NZZ4"/>
<dbReference type="Proteomes" id="UP000000437">
    <property type="component" value="Chromosome 14"/>
</dbReference>
<dbReference type="Bgee" id="ENSDARG00000059150">
    <property type="expression patterns" value="Expressed in mature ovarian follicle and 25 other cell types or tissues"/>
</dbReference>
<dbReference type="GO" id="GO:0016020">
    <property type="term" value="C:membrane"/>
    <property type="evidence" value="ECO:0007669"/>
    <property type="project" value="UniProtKB-SubCell"/>
</dbReference>
<dbReference type="GO" id="GO:0036038">
    <property type="term" value="C:MKS complex"/>
    <property type="evidence" value="ECO:0000318"/>
    <property type="project" value="GO_Central"/>
</dbReference>
<dbReference type="GO" id="GO:1905515">
    <property type="term" value="P:non-motile cilium assembly"/>
    <property type="evidence" value="ECO:0000318"/>
    <property type="project" value="GO_Central"/>
</dbReference>
<dbReference type="GO" id="GO:1904491">
    <property type="term" value="P:protein localization to ciliary transition zone"/>
    <property type="evidence" value="ECO:0000318"/>
    <property type="project" value="GO_Central"/>
</dbReference>
<dbReference type="InterPro" id="IPR029248">
    <property type="entry name" value="TMEM107"/>
</dbReference>
<dbReference type="PANTHER" id="PTHR34341">
    <property type="entry name" value="TRANSMEMBRANE PROTEIN 107"/>
    <property type="match status" value="1"/>
</dbReference>
<dbReference type="PANTHER" id="PTHR34341:SF1">
    <property type="entry name" value="TRANSMEMBRANE PROTEIN 107"/>
    <property type="match status" value="1"/>
</dbReference>
<dbReference type="Pfam" id="PF14995">
    <property type="entry name" value="TMEM107"/>
    <property type="match status" value="1"/>
</dbReference>
<comment type="function">
    <text evidence="1">May play a role in cilia formation and embryonic patterning.</text>
</comment>
<comment type="subcellular location">
    <subcellularLocation>
        <location evidence="3">Membrane</location>
        <topology evidence="3">Multi-pass membrane protein</topology>
    </subcellularLocation>
</comment>
<protein>
    <recommendedName>
        <fullName>Transmembrane protein 107</fullName>
    </recommendedName>
</protein>
<sequence length="135" mass="15312">MSALKSLVPARFLTLTAHLVIIITIFWSRDNNIQSCLPLEFTEDQYRTEDTRLTVALSVTLALFVLELAGFLSGVSMFNSNQALLSLITHSSACVCLSFFVFHQWPCWTYWIIFSICSVFPAVVELFLLLSQRVL</sequence>
<feature type="chain" id="PRO_0000254544" description="Transmembrane protein 107">
    <location>
        <begin position="1"/>
        <end position="135"/>
    </location>
</feature>
<feature type="transmembrane region" description="Helical" evidence="2">
    <location>
        <begin position="7"/>
        <end position="27"/>
    </location>
</feature>
<feature type="transmembrane region" description="Helical" evidence="2">
    <location>
        <begin position="55"/>
        <end position="75"/>
    </location>
</feature>
<feature type="transmembrane region" description="Helical" evidence="2">
    <location>
        <begin position="83"/>
        <end position="103"/>
    </location>
</feature>
<feature type="transmembrane region" description="Helical" evidence="2">
    <location>
        <begin position="110"/>
        <end position="130"/>
    </location>
</feature>
<reference key="1">
    <citation type="submission" date="2004-01" db="EMBL/GenBank/DDBJ databases">
        <authorList>
            <consortium name="NIH - Zebrafish Gene Collection (ZGC) project"/>
        </authorList>
    </citation>
    <scope>NUCLEOTIDE SEQUENCE [LARGE SCALE MRNA]</scope>
</reference>
<accession>Q6NZZ4</accession>
<organism>
    <name type="scientific">Danio rerio</name>
    <name type="common">Zebrafish</name>
    <name type="synonym">Brachydanio rerio</name>
    <dbReference type="NCBI Taxonomy" id="7955"/>
    <lineage>
        <taxon>Eukaryota</taxon>
        <taxon>Metazoa</taxon>
        <taxon>Chordata</taxon>
        <taxon>Craniata</taxon>
        <taxon>Vertebrata</taxon>
        <taxon>Euteleostomi</taxon>
        <taxon>Actinopterygii</taxon>
        <taxon>Neopterygii</taxon>
        <taxon>Teleostei</taxon>
        <taxon>Ostariophysi</taxon>
        <taxon>Cypriniformes</taxon>
        <taxon>Danionidae</taxon>
        <taxon>Danioninae</taxon>
        <taxon>Danio</taxon>
    </lineage>
</organism>
<keyword id="KW-0970">Cilium biogenesis/degradation</keyword>
<keyword id="KW-0217">Developmental protein</keyword>
<keyword id="KW-0472">Membrane</keyword>
<keyword id="KW-1185">Reference proteome</keyword>
<keyword id="KW-0812">Transmembrane</keyword>
<keyword id="KW-1133">Transmembrane helix</keyword>
<evidence type="ECO:0000250" key="1"/>
<evidence type="ECO:0000255" key="2"/>
<evidence type="ECO:0000305" key="3"/>